<feature type="initiator methionine" description="Removed" evidence="1">
    <location>
        <position position="1"/>
    </location>
</feature>
<feature type="chain" id="PRO_0000428512" description="RNA-binding protein KhpA">
    <location>
        <begin position="2"/>
        <end position="80"/>
    </location>
</feature>
<feature type="domain" description="KH" evidence="2">
    <location>
        <begin position="33"/>
        <end position="80"/>
    </location>
</feature>
<name>KHPA_MYCTO</name>
<sequence>MSAVVVDAVEHLVRGIVDNPDDVRVDLITSRRGRTVEVHVHPDDLGKVIGRGGRTATALRTLVAGIGGRGIRVDVVDTDQ</sequence>
<gene>
    <name evidence="2" type="primary">khpA</name>
    <name type="ordered locus">MT2976</name>
</gene>
<dbReference type="EMBL" id="AE000516">
    <property type="protein sequence ID" value="AAK47302.1"/>
    <property type="molecule type" value="Genomic_DNA"/>
</dbReference>
<dbReference type="PIR" id="G70927">
    <property type="entry name" value="G70927"/>
</dbReference>
<dbReference type="RefSeq" id="WP_003414728.1">
    <property type="nucleotide sequence ID" value="NZ_KK341227.1"/>
</dbReference>
<dbReference type="SMR" id="P9WFM6"/>
<dbReference type="KEGG" id="mtc:MT2976"/>
<dbReference type="PATRIC" id="fig|83331.31.peg.3216"/>
<dbReference type="HOGENOM" id="CLU_132074_3_0_11"/>
<dbReference type="Proteomes" id="UP000001020">
    <property type="component" value="Chromosome"/>
</dbReference>
<dbReference type="GO" id="GO:0005737">
    <property type="term" value="C:cytoplasm"/>
    <property type="evidence" value="ECO:0007669"/>
    <property type="project" value="UniProtKB-SubCell"/>
</dbReference>
<dbReference type="GO" id="GO:0003723">
    <property type="term" value="F:RNA binding"/>
    <property type="evidence" value="ECO:0007669"/>
    <property type="project" value="UniProtKB-UniRule"/>
</dbReference>
<dbReference type="CDD" id="cd22533">
    <property type="entry name" value="KH-II_YlqC-like"/>
    <property type="match status" value="1"/>
</dbReference>
<dbReference type="Gene3D" id="3.30.300.20">
    <property type="match status" value="1"/>
</dbReference>
<dbReference type="HAMAP" id="MF_00088">
    <property type="entry name" value="KhpA"/>
    <property type="match status" value="1"/>
</dbReference>
<dbReference type="InterPro" id="IPR015946">
    <property type="entry name" value="KH_dom-like_a/b"/>
</dbReference>
<dbReference type="InterPro" id="IPR009019">
    <property type="entry name" value="KH_sf_prok-type"/>
</dbReference>
<dbReference type="InterPro" id="IPR020627">
    <property type="entry name" value="KhpA"/>
</dbReference>
<dbReference type="NCBIfam" id="NF002761">
    <property type="entry name" value="PRK02821.1"/>
    <property type="match status" value="1"/>
</dbReference>
<dbReference type="PANTHER" id="PTHR34654:SF1">
    <property type="entry name" value="RNA-BINDING PROTEIN KHPA"/>
    <property type="match status" value="1"/>
</dbReference>
<dbReference type="PANTHER" id="PTHR34654">
    <property type="entry name" value="UPF0109 PROTEIN SCO5592"/>
    <property type="match status" value="1"/>
</dbReference>
<dbReference type="Pfam" id="PF13083">
    <property type="entry name" value="KH_KhpA-B"/>
    <property type="match status" value="1"/>
</dbReference>
<dbReference type="SUPFAM" id="SSF54814">
    <property type="entry name" value="Prokaryotic type KH domain (KH-domain type II)"/>
    <property type="match status" value="1"/>
</dbReference>
<dbReference type="PROSITE" id="PS50084">
    <property type="entry name" value="KH_TYPE_1"/>
    <property type="match status" value="1"/>
</dbReference>
<organism>
    <name type="scientific">Mycobacterium tuberculosis (strain CDC 1551 / Oshkosh)</name>
    <dbReference type="NCBI Taxonomy" id="83331"/>
    <lineage>
        <taxon>Bacteria</taxon>
        <taxon>Bacillati</taxon>
        <taxon>Actinomycetota</taxon>
        <taxon>Actinomycetes</taxon>
        <taxon>Mycobacteriales</taxon>
        <taxon>Mycobacteriaceae</taxon>
        <taxon>Mycobacterium</taxon>
        <taxon>Mycobacterium tuberculosis complex</taxon>
    </lineage>
</organism>
<protein>
    <recommendedName>
        <fullName evidence="2">RNA-binding protein KhpA</fullName>
    </recommendedName>
    <alternativeName>
        <fullName evidence="2">KH-domain protein A</fullName>
    </alternativeName>
</protein>
<comment type="function">
    <text evidence="2">A probable RNA-binding protein.</text>
</comment>
<comment type="subcellular location">
    <subcellularLocation>
        <location evidence="2">Cytoplasm</location>
    </subcellularLocation>
</comment>
<comment type="similarity">
    <text evidence="2">Belongs to the KhpA RNA-binding protein family.</text>
</comment>
<reference key="1">
    <citation type="journal article" date="2002" name="J. Bacteriol.">
        <title>Whole-genome comparison of Mycobacterium tuberculosis clinical and laboratory strains.</title>
        <authorList>
            <person name="Fleischmann R.D."/>
            <person name="Alland D."/>
            <person name="Eisen J.A."/>
            <person name="Carpenter L."/>
            <person name="White O."/>
            <person name="Peterson J.D."/>
            <person name="DeBoy R.T."/>
            <person name="Dodson R.J."/>
            <person name="Gwinn M.L."/>
            <person name="Haft D.H."/>
            <person name="Hickey E.K."/>
            <person name="Kolonay J.F."/>
            <person name="Nelson W.C."/>
            <person name="Umayam L.A."/>
            <person name="Ermolaeva M.D."/>
            <person name="Salzberg S.L."/>
            <person name="Delcher A."/>
            <person name="Utterback T.R."/>
            <person name="Weidman J.F."/>
            <person name="Khouri H.M."/>
            <person name="Gill J."/>
            <person name="Mikula A."/>
            <person name="Bishai W."/>
            <person name="Jacobs W.R. Jr."/>
            <person name="Venter J.C."/>
            <person name="Fraser C.M."/>
        </authorList>
    </citation>
    <scope>NUCLEOTIDE SEQUENCE [LARGE SCALE GENOMIC DNA]</scope>
    <source>
        <strain>CDC 1551 / Oshkosh</strain>
    </source>
</reference>
<evidence type="ECO:0000250" key="1"/>
<evidence type="ECO:0000255" key="2">
    <source>
        <dbReference type="HAMAP-Rule" id="MF_00088"/>
    </source>
</evidence>
<proteinExistence type="inferred from homology"/>
<accession>P9WFM6</accession>
<accession>L0TB00</accession>
<accession>P67236</accession>
<accession>Q10826</accession>
<keyword id="KW-0963">Cytoplasm</keyword>
<keyword id="KW-1185">Reference proteome</keyword>
<keyword id="KW-0694">RNA-binding</keyword>